<protein>
    <recommendedName>
        <fullName evidence="1">Phospho-N-acetylmuramoyl-pentapeptide-transferase</fullName>
        <ecNumber evidence="1">2.7.8.13</ecNumber>
    </recommendedName>
    <alternativeName>
        <fullName evidence="1">UDP-MurNAc-pentapeptide phosphotransferase</fullName>
    </alternativeName>
</protein>
<dbReference type="EC" id="2.7.8.13" evidence="1"/>
<dbReference type="EMBL" id="CP001063">
    <property type="protein sequence ID" value="ACD09523.1"/>
    <property type="molecule type" value="Genomic_DNA"/>
</dbReference>
<dbReference type="RefSeq" id="WP_000964131.1">
    <property type="nucleotide sequence ID" value="NC_010658.1"/>
</dbReference>
<dbReference type="SMR" id="B2U292"/>
<dbReference type="STRING" id="344609.SbBS512_E0080"/>
<dbReference type="GeneID" id="93777347"/>
<dbReference type="KEGG" id="sbc:SbBS512_E0080"/>
<dbReference type="HOGENOM" id="CLU_023982_0_0_6"/>
<dbReference type="UniPathway" id="UPA00219"/>
<dbReference type="Proteomes" id="UP000001030">
    <property type="component" value="Chromosome"/>
</dbReference>
<dbReference type="GO" id="GO:0005886">
    <property type="term" value="C:plasma membrane"/>
    <property type="evidence" value="ECO:0007669"/>
    <property type="project" value="UniProtKB-SubCell"/>
</dbReference>
<dbReference type="GO" id="GO:0046872">
    <property type="term" value="F:metal ion binding"/>
    <property type="evidence" value="ECO:0007669"/>
    <property type="project" value="UniProtKB-KW"/>
</dbReference>
<dbReference type="GO" id="GO:0008963">
    <property type="term" value="F:phospho-N-acetylmuramoyl-pentapeptide-transferase activity"/>
    <property type="evidence" value="ECO:0007669"/>
    <property type="project" value="UniProtKB-UniRule"/>
</dbReference>
<dbReference type="GO" id="GO:0051992">
    <property type="term" value="F:UDP-N-acetylmuramoyl-L-alanyl-D-glutamyl-meso-2,6-diaminopimelyl-D-alanyl-D-alanine:undecaprenyl-phosphate transferase activity"/>
    <property type="evidence" value="ECO:0007669"/>
    <property type="project" value="RHEA"/>
</dbReference>
<dbReference type="GO" id="GO:0051301">
    <property type="term" value="P:cell division"/>
    <property type="evidence" value="ECO:0007669"/>
    <property type="project" value="UniProtKB-KW"/>
</dbReference>
<dbReference type="GO" id="GO:0071555">
    <property type="term" value="P:cell wall organization"/>
    <property type="evidence" value="ECO:0007669"/>
    <property type="project" value="UniProtKB-KW"/>
</dbReference>
<dbReference type="GO" id="GO:0009252">
    <property type="term" value="P:peptidoglycan biosynthetic process"/>
    <property type="evidence" value="ECO:0007669"/>
    <property type="project" value="UniProtKB-UniRule"/>
</dbReference>
<dbReference type="GO" id="GO:0008360">
    <property type="term" value="P:regulation of cell shape"/>
    <property type="evidence" value="ECO:0007669"/>
    <property type="project" value="UniProtKB-KW"/>
</dbReference>
<dbReference type="CDD" id="cd06852">
    <property type="entry name" value="GT_MraY"/>
    <property type="match status" value="1"/>
</dbReference>
<dbReference type="HAMAP" id="MF_00038">
    <property type="entry name" value="MraY"/>
    <property type="match status" value="1"/>
</dbReference>
<dbReference type="InterPro" id="IPR000715">
    <property type="entry name" value="Glycosyl_transferase_4"/>
</dbReference>
<dbReference type="InterPro" id="IPR003524">
    <property type="entry name" value="PNAcMuramoyl-5peptid_Trfase"/>
</dbReference>
<dbReference type="InterPro" id="IPR018480">
    <property type="entry name" value="PNAcMuramoyl-5peptid_Trfase_CS"/>
</dbReference>
<dbReference type="NCBIfam" id="TIGR00445">
    <property type="entry name" value="mraY"/>
    <property type="match status" value="1"/>
</dbReference>
<dbReference type="PANTHER" id="PTHR22926">
    <property type="entry name" value="PHOSPHO-N-ACETYLMURAMOYL-PENTAPEPTIDE-TRANSFERASE"/>
    <property type="match status" value="1"/>
</dbReference>
<dbReference type="PANTHER" id="PTHR22926:SF5">
    <property type="entry name" value="PHOSPHO-N-ACETYLMURAMOYL-PENTAPEPTIDE-TRANSFERASE HOMOLOG"/>
    <property type="match status" value="1"/>
</dbReference>
<dbReference type="Pfam" id="PF00953">
    <property type="entry name" value="Glycos_transf_4"/>
    <property type="match status" value="1"/>
</dbReference>
<dbReference type="Pfam" id="PF10555">
    <property type="entry name" value="MraY_sig1"/>
    <property type="match status" value="1"/>
</dbReference>
<dbReference type="PROSITE" id="PS01347">
    <property type="entry name" value="MRAY_1"/>
    <property type="match status" value="1"/>
</dbReference>
<dbReference type="PROSITE" id="PS01348">
    <property type="entry name" value="MRAY_2"/>
    <property type="match status" value="1"/>
</dbReference>
<reference key="1">
    <citation type="submission" date="2008-05" db="EMBL/GenBank/DDBJ databases">
        <title>Complete sequence of Shigella boydii serotype 18 strain BS512.</title>
        <authorList>
            <person name="Rasko D.A."/>
            <person name="Rosovitz M."/>
            <person name="Maurelli A.T."/>
            <person name="Myers G."/>
            <person name="Seshadri R."/>
            <person name="Cer R."/>
            <person name="Jiang L."/>
            <person name="Ravel J."/>
            <person name="Sebastian Y."/>
        </authorList>
    </citation>
    <scope>NUCLEOTIDE SEQUENCE [LARGE SCALE GENOMIC DNA]</scope>
    <source>
        <strain>CDC 3083-94 / BS512</strain>
    </source>
</reference>
<feature type="chain" id="PRO_1000090673" description="Phospho-N-acetylmuramoyl-pentapeptide-transferase">
    <location>
        <begin position="1"/>
        <end position="360"/>
    </location>
</feature>
<feature type="topological domain" description="Periplasmic" evidence="1">
    <location>
        <begin position="1"/>
        <end position="25"/>
    </location>
</feature>
<feature type="transmembrane region" description="Helical" evidence="1">
    <location>
        <begin position="26"/>
        <end position="46"/>
    </location>
</feature>
<feature type="topological domain" description="Cytoplasmic" evidence="1">
    <location>
        <begin position="47"/>
        <end position="71"/>
    </location>
</feature>
<feature type="transmembrane region" description="Helical" evidence="1">
    <location>
        <begin position="72"/>
        <end position="92"/>
    </location>
</feature>
<feature type="topological domain" description="Periplasmic" evidence="1">
    <location>
        <position position="93"/>
    </location>
</feature>
<feature type="transmembrane region" description="Helical" evidence="1">
    <location>
        <begin position="94"/>
        <end position="114"/>
    </location>
</feature>
<feature type="topological domain" description="Cytoplasmic" evidence="1">
    <location>
        <begin position="115"/>
        <end position="131"/>
    </location>
</feature>
<feature type="transmembrane region" description="Helical" evidence="1">
    <location>
        <begin position="132"/>
        <end position="152"/>
    </location>
</feature>
<feature type="topological domain" description="Periplasmic" evidence="1">
    <location>
        <begin position="153"/>
        <end position="167"/>
    </location>
</feature>
<feature type="transmembrane region" description="Helical" evidence="1">
    <location>
        <begin position="168"/>
        <end position="188"/>
    </location>
</feature>
<feature type="topological domain" description="Cytoplasmic" evidence="1">
    <location>
        <begin position="189"/>
        <end position="198"/>
    </location>
</feature>
<feature type="transmembrane region" description="Helical" evidence="1">
    <location>
        <begin position="199"/>
        <end position="219"/>
    </location>
</feature>
<feature type="topological domain" description="Periplasmic" evidence="1">
    <location>
        <begin position="220"/>
        <end position="235"/>
    </location>
</feature>
<feature type="transmembrane region" description="Helical" evidence="1">
    <location>
        <begin position="236"/>
        <end position="256"/>
    </location>
</feature>
<feature type="topological domain" description="Cytoplasmic" evidence="1">
    <location>
        <begin position="257"/>
        <end position="262"/>
    </location>
</feature>
<feature type="transmembrane region" description="Helical" evidence="1">
    <location>
        <begin position="263"/>
        <end position="283"/>
    </location>
</feature>
<feature type="topological domain" description="Periplasmic" evidence="1">
    <location>
        <begin position="284"/>
        <end position="287"/>
    </location>
</feature>
<feature type="transmembrane region" description="Helical" evidence="1">
    <location>
        <begin position="288"/>
        <end position="308"/>
    </location>
</feature>
<feature type="topological domain" description="Cytoplasmic" evidence="1">
    <location>
        <begin position="309"/>
        <end position="337"/>
    </location>
</feature>
<feature type="transmembrane region" description="Helical" evidence="1">
    <location>
        <begin position="338"/>
        <end position="358"/>
    </location>
</feature>
<feature type="topological domain" description="Periplasmic" evidence="1">
    <location>
        <begin position="359"/>
        <end position="360"/>
    </location>
</feature>
<sequence>MLVWLAEHLVKYYSGFNVFSYLTFRAIVSLLTALFISLWMGPRMIAHLQKLSFGQVVRNDGPESHFSKRGTPTMGGIMILTAIVISVLLWAYPSNPYVWCVLVVLVGYGVIGFVDDYRKVVRKDTKGLIARWKYFWMSVIALGVAFALYLAGKDTPATQLVVPFFKDVMPQLGLFYILLAYFVIVGTGNAVNLTDGLDGLAIMPTVFVAGGFALVAWATGNMNFASYLHIPYLRHAGELVIVCTAIVGAGLGFLWFNTYPAQVFMGDVGSLALGGALGIIAVLLRQEFLLVIMGGVFVVETLSVILQVGSFKLRGQRIFRMAPIHHHYELKGWPEPRVIVRFWIISLMLVLIGLATLKVR</sequence>
<name>MRAY_SHIB3</name>
<gene>
    <name evidence="1" type="primary">mraY</name>
    <name type="ordered locus">SbBS512_E0080</name>
</gene>
<proteinExistence type="inferred from homology"/>
<evidence type="ECO:0000255" key="1">
    <source>
        <dbReference type="HAMAP-Rule" id="MF_00038"/>
    </source>
</evidence>
<organism>
    <name type="scientific">Shigella boydii serotype 18 (strain CDC 3083-94 / BS512)</name>
    <dbReference type="NCBI Taxonomy" id="344609"/>
    <lineage>
        <taxon>Bacteria</taxon>
        <taxon>Pseudomonadati</taxon>
        <taxon>Pseudomonadota</taxon>
        <taxon>Gammaproteobacteria</taxon>
        <taxon>Enterobacterales</taxon>
        <taxon>Enterobacteriaceae</taxon>
        <taxon>Shigella</taxon>
    </lineage>
</organism>
<keyword id="KW-0131">Cell cycle</keyword>
<keyword id="KW-0132">Cell division</keyword>
<keyword id="KW-0997">Cell inner membrane</keyword>
<keyword id="KW-1003">Cell membrane</keyword>
<keyword id="KW-0133">Cell shape</keyword>
<keyword id="KW-0961">Cell wall biogenesis/degradation</keyword>
<keyword id="KW-0460">Magnesium</keyword>
<keyword id="KW-0472">Membrane</keyword>
<keyword id="KW-0479">Metal-binding</keyword>
<keyword id="KW-0573">Peptidoglycan synthesis</keyword>
<keyword id="KW-1185">Reference proteome</keyword>
<keyword id="KW-0808">Transferase</keyword>
<keyword id="KW-0812">Transmembrane</keyword>
<keyword id="KW-1133">Transmembrane helix</keyword>
<accession>B2U292</accession>
<comment type="function">
    <text evidence="1">Catalyzes the initial step of the lipid cycle reactions in the biosynthesis of the cell wall peptidoglycan: transfers peptidoglycan precursor phospho-MurNAc-pentapeptide from UDP-MurNAc-pentapeptide onto the lipid carrier undecaprenyl phosphate, yielding undecaprenyl-pyrophosphoryl-MurNAc-pentapeptide, known as lipid I.</text>
</comment>
<comment type="catalytic activity">
    <reaction evidence="1">
        <text>UDP-N-acetyl-alpha-D-muramoyl-L-alanyl-gamma-D-glutamyl-meso-2,6-diaminopimeloyl-D-alanyl-D-alanine + di-trans,octa-cis-undecaprenyl phosphate = di-trans,octa-cis-undecaprenyl diphospho-N-acetyl-alpha-D-muramoyl-L-alanyl-D-glutamyl-meso-2,6-diaminopimeloyl-D-alanyl-D-alanine + UMP</text>
        <dbReference type="Rhea" id="RHEA:28386"/>
        <dbReference type="ChEBI" id="CHEBI:57865"/>
        <dbReference type="ChEBI" id="CHEBI:60392"/>
        <dbReference type="ChEBI" id="CHEBI:61386"/>
        <dbReference type="ChEBI" id="CHEBI:61387"/>
        <dbReference type="EC" id="2.7.8.13"/>
    </reaction>
</comment>
<comment type="cofactor">
    <cofactor evidence="1">
        <name>Mg(2+)</name>
        <dbReference type="ChEBI" id="CHEBI:18420"/>
    </cofactor>
</comment>
<comment type="pathway">
    <text evidence="1">Cell wall biogenesis; peptidoglycan biosynthesis.</text>
</comment>
<comment type="subcellular location">
    <subcellularLocation>
        <location evidence="1">Cell inner membrane</location>
        <topology evidence="1">Multi-pass membrane protein</topology>
    </subcellularLocation>
</comment>
<comment type="similarity">
    <text evidence="1">Belongs to the glycosyltransferase 4 family. MraY subfamily.</text>
</comment>